<proteinExistence type="inferred from homology"/>
<protein>
    <recommendedName>
        <fullName>UDP-N-acetylglucosamine transferase subunit alg14</fullName>
    </recommendedName>
    <alternativeName>
        <fullName>Asparagine-linked glycosylation protein 14</fullName>
    </alternativeName>
</protein>
<sequence>MNTYVLTAIAVLASLIILLVGRNAIKSSKKKPFQKHLLVFFGSGGHTGEMLNLLNALDDKLYSVRSYVAGSDDTMSVSKASLLSNSLPSVKSKIFKVPRARYVKQSWLTTPFTAFWSLLGSISVIFWNPFGIPDVILCNGPGTCVFICLLGYLAKFLGKNVKIVYVESFARVKSLSLSGKILMPFVDRFLVQWPDLATKYKRAEYIGIVA</sequence>
<accession>O14199</accession>
<name>ALG14_SCHPO</name>
<dbReference type="EMBL" id="CU329670">
    <property type="protein sequence ID" value="CAB10854.1"/>
    <property type="molecule type" value="Genomic_DNA"/>
</dbReference>
<dbReference type="PIR" id="T38960">
    <property type="entry name" value="T38960"/>
</dbReference>
<dbReference type="RefSeq" id="NP_593363.1">
    <property type="nucleotide sequence ID" value="NM_001018795.2"/>
</dbReference>
<dbReference type="SMR" id="O14199"/>
<dbReference type="FunCoup" id="O14199">
    <property type="interactions" value="153"/>
</dbReference>
<dbReference type="STRING" id="284812.O14199"/>
<dbReference type="CAZy" id="GT1">
    <property type="family name" value="Glycosyltransferase Family 1"/>
</dbReference>
<dbReference type="PaxDb" id="4896-SPAC5D6.06c.1"/>
<dbReference type="EnsemblFungi" id="SPAC5D6.06c.1">
    <property type="protein sequence ID" value="SPAC5D6.06c.1:pep"/>
    <property type="gene ID" value="SPAC5D6.06c"/>
</dbReference>
<dbReference type="GeneID" id="2541499"/>
<dbReference type="KEGG" id="spo:2541499"/>
<dbReference type="PomBase" id="SPAC5D6.06c">
    <property type="gene designation" value="alg14"/>
</dbReference>
<dbReference type="VEuPathDB" id="FungiDB:SPAC5D6.06c"/>
<dbReference type="eggNOG" id="KOG3339">
    <property type="taxonomic scope" value="Eukaryota"/>
</dbReference>
<dbReference type="HOGENOM" id="CLU_064541_0_1_1"/>
<dbReference type="InParanoid" id="O14199"/>
<dbReference type="OMA" id="CRIVFIE"/>
<dbReference type="PhylomeDB" id="O14199"/>
<dbReference type="Reactome" id="R-SPO-446193">
    <property type="pathway name" value="Biosynthesis of the N-glycan precursor (dolichol lipid-linked oligosaccharide, LLO) and transfer to a nascent protein"/>
</dbReference>
<dbReference type="PRO" id="PR:O14199"/>
<dbReference type="Proteomes" id="UP000002485">
    <property type="component" value="Chromosome I"/>
</dbReference>
<dbReference type="GO" id="GO:0098554">
    <property type="term" value="C:cytoplasmic side of endoplasmic reticulum membrane"/>
    <property type="evidence" value="ECO:0000304"/>
    <property type="project" value="PomBase"/>
</dbReference>
<dbReference type="GO" id="GO:0005783">
    <property type="term" value="C:endoplasmic reticulum"/>
    <property type="evidence" value="ECO:0007005"/>
    <property type="project" value="PomBase"/>
</dbReference>
<dbReference type="GO" id="GO:0031965">
    <property type="term" value="C:nuclear membrane"/>
    <property type="evidence" value="ECO:0007669"/>
    <property type="project" value="UniProtKB-SubCell"/>
</dbReference>
<dbReference type="GO" id="GO:0043541">
    <property type="term" value="C:UDP-N-acetylglucosamine transferase complex"/>
    <property type="evidence" value="ECO:0000318"/>
    <property type="project" value="GO_Central"/>
</dbReference>
<dbReference type="GO" id="GO:0043495">
    <property type="term" value="F:protein-membrane adaptor activity"/>
    <property type="evidence" value="ECO:0000250"/>
    <property type="project" value="PomBase"/>
</dbReference>
<dbReference type="GO" id="GO:0006488">
    <property type="term" value="P:dolichol-linked oligosaccharide biosynthetic process"/>
    <property type="evidence" value="ECO:0000318"/>
    <property type="project" value="GO_Central"/>
</dbReference>
<dbReference type="Gene3D" id="3.40.50.2000">
    <property type="entry name" value="Glycogen Phosphorylase B"/>
    <property type="match status" value="1"/>
</dbReference>
<dbReference type="InterPro" id="IPR013969">
    <property type="entry name" value="Oligosacch_biosynth_Alg14"/>
</dbReference>
<dbReference type="PANTHER" id="PTHR12154">
    <property type="entry name" value="GLYCOSYL TRANSFERASE-RELATED"/>
    <property type="match status" value="1"/>
</dbReference>
<dbReference type="PANTHER" id="PTHR12154:SF4">
    <property type="entry name" value="UDP-N-ACETYLGLUCOSAMINE TRANSFERASE SUBUNIT ALG14 HOMOLOG"/>
    <property type="match status" value="1"/>
</dbReference>
<dbReference type="Pfam" id="PF08660">
    <property type="entry name" value="Alg14"/>
    <property type="match status" value="1"/>
</dbReference>
<organism>
    <name type="scientific">Schizosaccharomyces pombe (strain 972 / ATCC 24843)</name>
    <name type="common">Fission yeast</name>
    <dbReference type="NCBI Taxonomy" id="284812"/>
    <lineage>
        <taxon>Eukaryota</taxon>
        <taxon>Fungi</taxon>
        <taxon>Dikarya</taxon>
        <taxon>Ascomycota</taxon>
        <taxon>Taphrinomycotina</taxon>
        <taxon>Schizosaccharomycetes</taxon>
        <taxon>Schizosaccharomycetales</taxon>
        <taxon>Schizosaccharomycetaceae</taxon>
        <taxon>Schizosaccharomyces</taxon>
    </lineage>
</organism>
<comment type="function">
    <text evidence="1">Involved in protein N-glycosylation. Essential for the second step of the dolichol-linked oligosaccharide pathway. Anchors the catalytic subunit alg13 to the ER (By similarity).</text>
</comment>
<comment type="subunit">
    <text evidence="1">Heterodimer with alg13 to form a functional enzyme.</text>
</comment>
<comment type="subcellular location">
    <subcellularLocation>
        <location evidence="2">Endoplasmic reticulum membrane</location>
        <topology evidence="3">Single-pass membrane protein</topology>
    </subcellularLocation>
    <subcellularLocation>
        <location evidence="2">Nucleus membrane</location>
        <topology evidence="3">Single-pass membrane protein</topology>
    </subcellularLocation>
</comment>
<comment type="similarity">
    <text evidence="4">Belongs to the ALG14 family.</text>
</comment>
<gene>
    <name type="primary">alg14</name>
    <name type="ORF">SPAC5D6.06c</name>
</gene>
<evidence type="ECO:0000250" key="1"/>
<evidence type="ECO:0000250" key="2">
    <source>
        <dbReference type="UniProtKB" id="P38242"/>
    </source>
</evidence>
<evidence type="ECO:0000255" key="3"/>
<evidence type="ECO:0000305" key="4"/>
<feature type="chain" id="PRO_0000123816" description="UDP-N-acetylglucosamine transferase subunit alg14">
    <location>
        <begin position="1"/>
        <end position="210"/>
    </location>
</feature>
<feature type="topological domain" description="Lumenal" evidence="2">
    <location>
        <begin position="1"/>
        <end position="3"/>
    </location>
</feature>
<feature type="transmembrane region" description="Helical" evidence="3">
    <location>
        <begin position="4"/>
        <end position="21"/>
    </location>
</feature>
<feature type="topological domain" description="Cytoplasmic" evidence="2">
    <location>
        <begin position="22"/>
        <end position="210"/>
    </location>
</feature>
<keyword id="KW-0256">Endoplasmic reticulum</keyword>
<keyword id="KW-0472">Membrane</keyword>
<keyword id="KW-0539">Nucleus</keyword>
<keyword id="KW-1185">Reference proteome</keyword>
<keyword id="KW-0812">Transmembrane</keyword>
<keyword id="KW-1133">Transmembrane helix</keyword>
<reference key="1">
    <citation type="journal article" date="2002" name="Nature">
        <title>The genome sequence of Schizosaccharomyces pombe.</title>
        <authorList>
            <person name="Wood V."/>
            <person name="Gwilliam R."/>
            <person name="Rajandream M.A."/>
            <person name="Lyne M.H."/>
            <person name="Lyne R."/>
            <person name="Stewart A."/>
            <person name="Sgouros J.G."/>
            <person name="Peat N."/>
            <person name="Hayles J."/>
            <person name="Baker S.G."/>
            <person name="Basham D."/>
            <person name="Bowman S."/>
            <person name="Brooks K."/>
            <person name="Brown D."/>
            <person name="Brown S."/>
            <person name="Chillingworth T."/>
            <person name="Churcher C.M."/>
            <person name="Collins M."/>
            <person name="Connor R."/>
            <person name="Cronin A."/>
            <person name="Davis P."/>
            <person name="Feltwell T."/>
            <person name="Fraser A."/>
            <person name="Gentles S."/>
            <person name="Goble A."/>
            <person name="Hamlin N."/>
            <person name="Harris D.E."/>
            <person name="Hidalgo J."/>
            <person name="Hodgson G."/>
            <person name="Holroyd S."/>
            <person name="Hornsby T."/>
            <person name="Howarth S."/>
            <person name="Huckle E.J."/>
            <person name="Hunt S."/>
            <person name="Jagels K."/>
            <person name="James K.D."/>
            <person name="Jones L."/>
            <person name="Jones M."/>
            <person name="Leather S."/>
            <person name="McDonald S."/>
            <person name="McLean J."/>
            <person name="Mooney P."/>
            <person name="Moule S."/>
            <person name="Mungall K.L."/>
            <person name="Murphy L.D."/>
            <person name="Niblett D."/>
            <person name="Odell C."/>
            <person name="Oliver K."/>
            <person name="O'Neil S."/>
            <person name="Pearson D."/>
            <person name="Quail M.A."/>
            <person name="Rabbinowitsch E."/>
            <person name="Rutherford K.M."/>
            <person name="Rutter S."/>
            <person name="Saunders D."/>
            <person name="Seeger K."/>
            <person name="Sharp S."/>
            <person name="Skelton J."/>
            <person name="Simmonds M.N."/>
            <person name="Squares R."/>
            <person name="Squares S."/>
            <person name="Stevens K."/>
            <person name="Taylor K."/>
            <person name="Taylor R.G."/>
            <person name="Tivey A."/>
            <person name="Walsh S.V."/>
            <person name="Warren T."/>
            <person name="Whitehead S."/>
            <person name="Woodward J.R."/>
            <person name="Volckaert G."/>
            <person name="Aert R."/>
            <person name="Robben J."/>
            <person name="Grymonprez B."/>
            <person name="Weltjens I."/>
            <person name="Vanstreels E."/>
            <person name="Rieger M."/>
            <person name="Schaefer M."/>
            <person name="Mueller-Auer S."/>
            <person name="Gabel C."/>
            <person name="Fuchs M."/>
            <person name="Duesterhoeft A."/>
            <person name="Fritzc C."/>
            <person name="Holzer E."/>
            <person name="Moestl D."/>
            <person name="Hilbert H."/>
            <person name="Borzym K."/>
            <person name="Langer I."/>
            <person name="Beck A."/>
            <person name="Lehrach H."/>
            <person name="Reinhardt R."/>
            <person name="Pohl T.M."/>
            <person name="Eger P."/>
            <person name="Zimmermann W."/>
            <person name="Wedler H."/>
            <person name="Wambutt R."/>
            <person name="Purnelle B."/>
            <person name="Goffeau A."/>
            <person name="Cadieu E."/>
            <person name="Dreano S."/>
            <person name="Gloux S."/>
            <person name="Lelaure V."/>
            <person name="Mottier S."/>
            <person name="Galibert F."/>
            <person name="Aves S.J."/>
            <person name="Xiang Z."/>
            <person name="Hunt C."/>
            <person name="Moore K."/>
            <person name="Hurst S.M."/>
            <person name="Lucas M."/>
            <person name="Rochet M."/>
            <person name="Gaillardin C."/>
            <person name="Tallada V.A."/>
            <person name="Garzon A."/>
            <person name="Thode G."/>
            <person name="Daga R.R."/>
            <person name="Cruzado L."/>
            <person name="Jimenez J."/>
            <person name="Sanchez M."/>
            <person name="del Rey F."/>
            <person name="Benito J."/>
            <person name="Dominguez A."/>
            <person name="Revuelta J.L."/>
            <person name="Moreno S."/>
            <person name="Armstrong J."/>
            <person name="Forsburg S.L."/>
            <person name="Cerutti L."/>
            <person name="Lowe T."/>
            <person name="McCombie W.R."/>
            <person name="Paulsen I."/>
            <person name="Potashkin J."/>
            <person name="Shpakovski G.V."/>
            <person name="Ussery D."/>
            <person name="Barrell B.G."/>
            <person name="Nurse P."/>
        </authorList>
    </citation>
    <scope>NUCLEOTIDE SEQUENCE [LARGE SCALE GENOMIC DNA]</scope>
    <source>
        <strain>972 / ATCC 24843</strain>
    </source>
</reference>